<name>A4GAT_PANTR</name>
<feature type="chain" id="PRO_0000080580" description="Lactosylceramide 4-alpha-galactosyltransferase">
    <location>
        <begin position="1"/>
        <end position="353"/>
    </location>
</feature>
<feature type="topological domain" description="Cytoplasmic" evidence="3">
    <location>
        <begin position="1"/>
        <end position="22"/>
    </location>
</feature>
<feature type="transmembrane region" description="Helical; Signal-anchor for type II membrane protein" evidence="3">
    <location>
        <begin position="23"/>
        <end position="43"/>
    </location>
</feature>
<feature type="topological domain" description="Lumenal" evidence="3">
    <location>
        <begin position="44"/>
        <end position="353"/>
    </location>
</feature>
<feature type="short sequence motif" description="DXD motif" evidence="1">
    <location>
        <begin position="192"/>
        <end position="194"/>
    </location>
</feature>
<feature type="glycosylation site" description="N-linked (GlcNAc...) asparagine" evidence="3">
    <location>
        <position position="121"/>
    </location>
</feature>
<feature type="glycosylation site" description="N-linked (GlcNAc...) asparagine" evidence="3">
    <location>
        <position position="203"/>
    </location>
</feature>
<evidence type="ECO:0000250" key="1"/>
<evidence type="ECO:0000250" key="2">
    <source>
        <dbReference type="UniProtKB" id="Q9NPC4"/>
    </source>
</evidence>
<evidence type="ECO:0000255" key="3"/>
<evidence type="ECO:0000305" key="4"/>
<dbReference type="EC" id="2.4.1.228" evidence="2"/>
<dbReference type="EMBL" id="AB041419">
    <property type="protein sequence ID" value="BAA94504.1"/>
    <property type="molecule type" value="Genomic_DNA"/>
</dbReference>
<dbReference type="RefSeq" id="NP_001009123.1">
    <property type="nucleotide sequence ID" value="NM_001009123.1"/>
</dbReference>
<dbReference type="STRING" id="9598.ENSPTRP00000055744"/>
<dbReference type="CAZy" id="GT32">
    <property type="family name" value="Glycosyltransferase Family 32"/>
</dbReference>
<dbReference type="GlyCosmos" id="Q9N291">
    <property type="glycosylation" value="2 sites, No reported glycans"/>
</dbReference>
<dbReference type="PaxDb" id="9598-ENSPTRP00000054880"/>
<dbReference type="GeneID" id="470230"/>
<dbReference type="CTD" id="53947"/>
<dbReference type="eggNOG" id="KOG1928">
    <property type="taxonomic scope" value="Eukaryota"/>
</dbReference>
<dbReference type="InParanoid" id="Q9N291"/>
<dbReference type="Proteomes" id="UP000002277">
    <property type="component" value="Unplaced"/>
</dbReference>
<dbReference type="GO" id="GO:0000139">
    <property type="term" value="C:Golgi membrane"/>
    <property type="evidence" value="ECO:0007669"/>
    <property type="project" value="UniProtKB-SubCell"/>
</dbReference>
<dbReference type="GO" id="GO:0008378">
    <property type="term" value="F:galactosyltransferase activity"/>
    <property type="evidence" value="ECO:0000250"/>
    <property type="project" value="UniProtKB"/>
</dbReference>
<dbReference type="GO" id="GO:0050512">
    <property type="term" value="F:lactosylceramide 4-alpha-galactosyltransferase activity"/>
    <property type="evidence" value="ECO:0007669"/>
    <property type="project" value="UniProtKB-EC"/>
</dbReference>
<dbReference type="GO" id="GO:0006688">
    <property type="term" value="P:glycosphingolipid biosynthetic process"/>
    <property type="evidence" value="ECO:0000318"/>
    <property type="project" value="GO_Central"/>
</dbReference>
<dbReference type="FunFam" id="3.90.550.20:FF:000003">
    <property type="entry name" value="Lactosylceramide 4-alpha-galactosyltransferase"/>
    <property type="match status" value="1"/>
</dbReference>
<dbReference type="Gene3D" id="3.90.550.20">
    <property type="match status" value="1"/>
</dbReference>
<dbReference type="InterPro" id="IPR007652">
    <property type="entry name" value="A1-4-GlycosylTfrase_dom"/>
</dbReference>
<dbReference type="InterPro" id="IPR051981">
    <property type="entry name" value="Glycosyltransf_32"/>
</dbReference>
<dbReference type="InterPro" id="IPR007577">
    <property type="entry name" value="GlycoTrfase_DXD_sugar-bd_CS"/>
</dbReference>
<dbReference type="InterPro" id="IPR029044">
    <property type="entry name" value="Nucleotide-diphossugar_trans"/>
</dbReference>
<dbReference type="PANTHER" id="PTHR12042:SF17">
    <property type="entry name" value="LACTOSYLCERAMIDE 4-ALPHA-GALACTOSYLTRANSFERASE"/>
    <property type="match status" value="1"/>
</dbReference>
<dbReference type="PANTHER" id="PTHR12042">
    <property type="entry name" value="LACTOSYLCERAMIDE 4-ALPHA-GALACTOSYLTRANSFERASE ALPHA- 1,4-GALACTOSYLTRANSFERASE"/>
    <property type="match status" value="1"/>
</dbReference>
<dbReference type="Pfam" id="PF04572">
    <property type="entry name" value="Gb3_synth"/>
    <property type="match status" value="1"/>
</dbReference>
<dbReference type="Pfam" id="PF04488">
    <property type="entry name" value="Gly_transf_sug"/>
    <property type="match status" value="1"/>
</dbReference>
<dbReference type="SUPFAM" id="SSF53448">
    <property type="entry name" value="Nucleotide-diphospho-sugar transferases"/>
    <property type="match status" value="1"/>
</dbReference>
<sequence length="353" mass="40487">MSKPPDLLLRLLRGAPRQRVCTLFIIGFKFTFFVSIMIYWHVVGEPKEKGQLYNLPAEIPCPTLTPPTPPSHGPTPGNIFFLETSDRTNPNFLFMCSVESAARTHPESHVLVLMKGLPGGNASLPRHLGISLLSCFPNVQMLPLDLRELFQDTPLADWYAAVQGRWEPYLLPVLSDASRIALMWKFGGIYLDTDFIVLKNLRNLTNVLGTQSRYVLNGAFLAFERRHEFMALCMRDFVDHYNGWIWGHQGPQLLTRVFKKWCSIRSLAESRSCRGVTTLPPEAFYPIPWQDWKKYFEDINPEELPRLLSATYAVHVWNKKSQGTRFEATSRALLAQLHARYCPTTHEAMKMYL</sequence>
<accession>Q9N291</accession>
<keyword id="KW-0325">Glycoprotein</keyword>
<keyword id="KW-0328">Glycosyltransferase</keyword>
<keyword id="KW-0333">Golgi apparatus</keyword>
<keyword id="KW-0444">Lipid biosynthesis</keyword>
<keyword id="KW-0443">Lipid metabolism</keyword>
<keyword id="KW-0472">Membrane</keyword>
<keyword id="KW-1185">Reference proteome</keyword>
<keyword id="KW-0735">Signal-anchor</keyword>
<keyword id="KW-0808">Transferase</keyword>
<keyword id="KW-0812">Transmembrane</keyword>
<keyword id="KW-1133">Transmembrane helix</keyword>
<gene>
    <name type="primary">A4GALT</name>
    <name type="synonym">A14GALT</name>
    <name type="synonym">A4GALT1</name>
</gene>
<proteinExistence type="inferred from homology"/>
<comment type="function">
    <text evidence="2">Catalyzes the transfer of galactose from UDP-alpha-D-galactose to lactosylceramide/beta-D-galactosyl-(1-&gt;4)-beta-D-glucosyl-(1&lt;-&gt;1)-ceramide(d18:1(4E)) to produce globotriaosylceramide/globoside Gb3Cer (d18:1(4E)). Also able to transfer galactose to galactosylceramide/beta-D-Gal-(1&lt;-&gt;1')-Cer. Globoside Gb3Cer is a glycosphingolipid of the globo serie, one of the major types of neutral root structures of glycosphingolipids, that constitute a significant portion of mammalian cell membranes.</text>
</comment>
<comment type="catalytic activity">
    <reaction evidence="2">
        <text>a beta-D-Gal-(1-&gt;4)-beta-D-Glc-(1&lt;-&gt;1)-Cer(d18:1(4E)) + UDP-alpha-D-galactose = a globoside Gb3Cer (d18:1(4E)) + UDP + H(+)</text>
        <dbReference type="Rhea" id="RHEA:11924"/>
        <dbReference type="ChEBI" id="CHEBI:15378"/>
        <dbReference type="ChEBI" id="CHEBI:17950"/>
        <dbReference type="ChEBI" id="CHEBI:18313"/>
        <dbReference type="ChEBI" id="CHEBI:58223"/>
        <dbReference type="ChEBI" id="CHEBI:66914"/>
        <dbReference type="EC" id="2.4.1.228"/>
    </reaction>
    <physiologicalReaction direction="left-to-right" evidence="2">
        <dbReference type="Rhea" id="RHEA:11925"/>
    </physiologicalReaction>
</comment>
<comment type="catalytic activity">
    <reaction evidence="2">
        <text>a beta-D-Gal-(1&lt;-&gt;1')-ceramide + UDP-alpha-D-galactose = alpha-D-Gal-(1-&gt;4)-beta-D-Gal-(1&lt;-&gt;1')-Cer + UDP + H(+)</text>
        <dbReference type="Rhea" id="RHEA:60044"/>
        <dbReference type="ChEBI" id="CHEBI:15378"/>
        <dbReference type="ChEBI" id="CHEBI:58223"/>
        <dbReference type="ChEBI" id="CHEBI:66914"/>
        <dbReference type="ChEBI" id="CHEBI:143593"/>
        <dbReference type="ChEBI" id="CHEBI:143594"/>
    </reaction>
    <physiologicalReaction direction="left-to-right" evidence="2">
        <dbReference type="Rhea" id="RHEA:60045"/>
    </physiologicalReaction>
</comment>
<comment type="pathway">
    <text evidence="2">Glycolipid biosynthesis.</text>
</comment>
<comment type="subcellular location">
    <subcellularLocation>
        <location evidence="4">Golgi apparatus membrane</location>
        <topology evidence="4">Single-pass type II membrane protein</topology>
    </subcellularLocation>
</comment>
<comment type="domain">
    <text evidence="1">The conserved DXD motif is involved in enzyme activity.</text>
</comment>
<comment type="similarity">
    <text evidence="4">Belongs to the glycosyltransferase 32 family.</text>
</comment>
<organism>
    <name type="scientific">Pan troglodytes</name>
    <name type="common">Chimpanzee</name>
    <dbReference type="NCBI Taxonomy" id="9598"/>
    <lineage>
        <taxon>Eukaryota</taxon>
        <taxon>Metazoa</taxon>
        <taxon>Chordata</taxon>
        <taxon>Craniata</taxon>
        <taxon>Vertebrata</taxon>
        <taxon>Euteleostomi</taxon>
        <taxon>Mammalia</taxon>
        <taxon>Eutheria</taxon>
        <taxon>Euarchontoglires</taxon>
        <taxon>Primates</taxon>
        <taxon>Haplorrhini</taxon>
        <taxon>Catarrhini</taxon>
        <taxon>Hominidae</taxon>
        <taxon>Pan</taxon>
    </lineage>
</organism>
<protein>
    <recommendedName>
        <fullName>Lactosylceramide 4-alpha-galactosyltransferase</fullName>
        <ecNumber evidence="2">2.4.1.228</ecNumber>
    </recommendedName>
    <alternativeName>
        <fullName>Alpha-1,4-N-acetylglucosaminyltransferase</fullName>
    </alternativeName>
    <alternativeName>
        <fullName>Alpha-1,4-galactosyltransferase</fullName>
    </alternativeName>
    <alternativeName>
        <fullName>Globotriaosylceramide synthase</fullName>
        <shortName>Gb3 synthase</shortName>
    </alternativeName>
    <alternativeName>
        <fullName>UDP-galactose:beta-D-galactosyl-beta1-R 4-alpha-D-galactosyltransferase</fullName>
    </alternativeName>
</protein>
<reference key="1">
    <citation type="journal article" date="2004" name="Mol. Biol. Evol.">
        <title>Human-specific amino acid changes found in 103 protein-coding genes.</title>
        <authorList>
            <person name="Kitano T."/>
            <person name="Liu Y.-H."/>
            <person name="Ueda S."/>
            <person name="Saitou N."/>
        </authorList>
    </citation>
    <scope>NUCLEOTIDE SEQUENCE [GENOMIC DNA]</scope>
</reference>